<sequence>MDTFLNTSESVNEGHPDKLCDQISDAVLDACLEQDPDSKVACETCSKTNMVMVFGEITTKANVDYEKIVRKTCRDIGFVSDDVGLDADNCKVLVQIEQQSPDIAQGVHGHLTKRPEDIGAGDQGHMFGYATDETPELMPLSHVLATKLGAKLTEVRKNGTCPWLRPDGKTQVTVEYYNDKGAMVPIRVHTVLISTQHDETVTNDEIAADLKEHVIKPIIPAKYLDEKTIFHLNPSGRFVIGGPHGDAGLTGRMIIIDTYGGWGAHGGGAFSGKDPTKVDRSGAYIVRQAAKSIVANGLARRCIVQVSYAIGVPDPLSVFVDSYGTGNIPDKEILKIVKETFDFRPGMIAINLDLKRGGNNRFLKTAAYGHFGRDDADFTWEVVKPLKWEKPQA</sequence>
<protein>
    <recommendedName>
        <fullName>S-adenosylmethionine synthase 2</fullName>
        <shortName>AdoMet synthase 2</shortName>
        <ecNumber evidence="5">2.5.1.6</ecNumber>
    </recommendedName>
    <alternativeName>
        <fullName>Methionine adenosyltransferase 2</fullName>
        <shortName>MAT 2</shortName>
    </alternativeName>
</protein>
<feature type="chain" id="PRO_0000363020" description="S-adenosylmethionine synthase 2">
    <location>
        <begin position="1"/>
        <end position="393"/>
    </location>
</feature>
<feature type="binding site" evidence="3">
    <location>
        <position position="9"/>
    </location>
    <ligand>
        <name>Mg(2+)</name>
        <dbReference type="ChEBI" id="CHEBI:18420"/>
    </ligand>
</feature>
<feature type="binding site" description="in other chain" evidence="4">
    <location>
        <position position="15"/>
    </location>
    <ligand>
        <name>ATP</name>
        <dbReference type="ChEBI" id="CHEBI:30616"/>
        <note>ligand shared between two neighboring subunits</note>
    </ligand>
</feature>
<feature type="binding site" evidence="2">
    <location>
        <position position="43"/>
    </location>
    <ligand>
        <name>K(+)</name>
        <dbReference type="ChEBI" id="CHEBI:29103"/>
    </ligand>
</feature>
<feature type="binding site" description="in other chain" evidence="2">
    <location>
        <position position="56"/>
    </location>
    <ligand>
        <name>L-methionine</name>
        <dbReference type="ChEBI" id="CHEBI:57844"/>
        <note>ligand shared between two neighboring subunits</note>
    </ligand>
</feature>
<feature type="binding site" description="in other chain" evidence="2">
    <location>
        <position position="99"/>
    </location>
    <ligand>
        <name>L-methionine</name>
        <dbReference type="ChEBI" id="CHEBI:57844"/>
        <note>ligand shared between two neighboring subunits</note>
    </ligand>
</feature>
<feature type="binding site" description="in other chain" evidence="4">
    <location>
        <begin position="167"/>
        <end position="169"/>
    </location>
    <ligand>
        <name>ATP</name>
        <dbReference type="ChEBI" id="CHEBI:30616"/>
        <note>ligand shared between two neighboring subunits</note>
    </ligand>
</feature>
<feature type="binding site" description="in other chain" evidence="4">
    <location>
        <begin position="235"/>
        <end position="238"/>
    </location>
    <ligand>
        <name>ATP</name>
        <dbReference type="ChEBI" id="CHEBI:30616"/>
        <note>ligand shared between two neighboring subunits</note>
    </ligand>
</feature>
<feature type="binding site" description="in other chain" evidence="4">
    <location>
        <position position="246"/>
    </location>
    <ligand>
        <name>ATP</name>
        <dbReference type="ChEBI" id="CHEBI:30616"/>
        <note>ligand shared between two neighboring subunits</note>
    </ligand>
</feature>
<feature type="binding site" evidence="2">
    <location>
        <position position="246"/>
    </location>
    <ligand>
        <name>L-methionine</name>
        <dbReference type="ChEBI" id="CHEBI:57844"/>
        <note>ligand shared between two neighboring subunits</note>
    </ligand>
</feature>
<feature type="binding site" description="in other chain" evidence="2">
    <location>
        <begin position="252"/>
        <end position="253"/>
    </location>
    <ligand>
        <name>ATP</name>
        <dbReference type="ChEBI" id="CHEBI:30616"/>
        <note>ligand shared between two neighboring subunits</note>
    </ligand>
</feature>
<feature type="binding site" evidence="2">
    <location>
        <position position="269"/>
    </location>
    <ligand>
        <name>ATP</name>
        <dbReference type="ChEBI" id="CHEBI:30616"/>
        <note>ligand shared between two neighboring subunits</note>
    </ligand>
</feature>
<feature type="binding site" evidence="2">
    <location>
        <position position="273"/>
    </location>
    <ligand>
        <name>ATP</name>
        <dbReference type="ChEBI" id="CHEBI:30616"/>
        <note>ligand shared between two neighboring subunits</note>
    </ligand>
</feature>
<feature type="binding site" evidence="3">
    <location>
        <position position="277"/>
    </location>
    <ligand>
        <name>ATP</name>
        <dbReference type="ChEBI" id="CHEBI:30616"/>
        <note>ligand shared between two neighboring subunits</note>
    </ligand>
</feature>
<feature type="binding site" description="in other chain" evidence="2">
    <location>
        <position position="277"/>
    </location>
    <ligand>
        <name>L-methionine</name>
        <dbReference type="ChEBI" id="CHEBI:57844"/>
        <note>ligand shared between two neighboring subunits</note>
    </ligand>
</feature>
<name>METK2_DAUCA</name>
<dbReference type="EC" id="2.5.1.6" evidence="5"/>
<dbReference type="EMBL" id="AY583462">
    <property type="protein sequence ID" value="AAT85666.1"/>
    <property type="molecule type" value="mRNA"/>
</dbReference>
<dbReference type="SMR" id="Q56TU3"/>
<dbReference type="UniPathway" id="UPA00315">
    <property type="reaction ID" value="UER00080"/>
</dbReference>
<dbReference type="GO" id="GO:0005737">
    <property type="term" value="C:cytoplasm"/>
    <property type="evidence" value="ECO:0007669"/>
    <property type="project" value="UniProtKB-SubCell"/>
</dbReference>
<dbReference type="GO" id="GO:0005524">
    <property type="term" value="F:ATP binding"/>
    <property type="evidence" value="ECO:0007669"/>
    <property type="project" value="UniProtKB-KW"/>
</dbReference>
<dbReference type="GO" id="GO:0046872">
    <property type="term" value="F:metal ion binding"/>
    <property type="evidence" value="ECO:0007669"/>
    <property type="project" value="UniProtKB-KW"/>
</dbReference>
<dbReference type="GO" id="GO:0004478">
    <property type="term" value="F:methionine adenosyltransferase activity"/>
    <property type="evidence" value="ECO:0007669"/>
    <property type="project" value="UniProtKB-EC"/>
</dbReference>
<dbReference type="GO" id="GO:0006730">
    <property type="term" value="P:one-carbon metabolic process"/>
    <property type="evidence" value="ECO:0007669"/>
    <property type="project" value="UniProtKB-KW"/>
</dbReference>
<dbReference type="GO" id="GO:0006556">
    <property type="term" value="P:S-adenosylmethionine biosynthetic process"/>
    <property type="evidence" value="ECO:0007669"/>
    <property type="project" value="UniProtKB-UniPathway"/>
</dbReference>
<dbReference type="CDD" id="cd18079">
    <property type="entry name" value="S-AdoMet_synt"/>
    <property type="match status" value="1"/>
</dbReference>
<dbReference type="FunFam" id="3.30.300.10:FF:000001">
    <property type="entry name" value="S-adenosylmethionine synthase"/>
    <property type="match status" value="1"/>
</dbReference>
<dbReference type="FunFam" id="3.30.300.10:FF:000003">
    <property type="entry name" value="S-adenosylmethionine synthase"/>
    <property type="match status" value="1"/>
</dbReference>
<dbReference type="FunFam" id="3.30.300.10:FF:000004">
    <property type="entry name" value="S-adenosylmethionine synthase"/>
    <property type="match status" value="1"/>
</dbReference>
<dbReference type="Gene3D" id="3.30.300.10">
    <property type="match status" value="3"/>
</dbReference>
<dbReference type="HAMAP" id="MF_00086">
    <property type="entry name" value="S_AdoMet_synth1"/>
    <property type="match status" value="1"/>
</dbReference>
<dbReference type="InterPro" id="IPR022631">
    <property type="entry name" value="ADOMET_SYNTHASE_CS"/>
</dbReference>
<dbReference type="InterPro" id="IPR022630">
    <property type="entry name" value="S-AdoMet_synt_C"/>
</dbReference>
<dbReference type="InterPro" id="IPR022629">
    <property type="entry name" value="S-AdoMet_synt_central"/>
</dbReference>
<dbReference type="InterPro" id="IPR022628">
    <property type="entry name" value="S-AdoMet_synt_N"/>
</dbReference>
<dbReference type="InterPro" id="IPR002133">
    <property type="entry name" value="S-AdoMet_synthetase"/>
</dbReference>
<dbReference type="InterPro" id="IPR022636">
    <property type="entry name" value="S-AdoMet_synthetase_sfam"/>
</dbReference>
<dbReference type="NCBIfam" id="TIGR01034">
    <property type="entry name" value="metK"/>
    <property type="match status" value="1"/>
</dbReference>
<dbReference type="PANTHER" id="PTHR11964">
    <property type="entry name" value="S-ADENOSYLMETHIONINE SYNTHETASE"/>
    <property type="match status" value="1"/>
</dbReference>
<dbReference type="Pfam" id="PF02773">
    <property type="entry name" value="S-AdoMet_synt_C"/>
    <property type="match status" value="1"/>
</dbReference>
<dbReference type="Pfam" id="PF02772">
    <property type="entry name" value="S-AdoMet_synt_M"/>
    <property type="match status" value="1"/>
</dbReference>
<dbReference type="Pfam" id="PF00438">
    <property type="entry name" value="S-AdoMet_synt_N"/>
    <property type="match status" value="1"/>
</dbReference>
<dbReference type="PIRSF" id="PIRSF000497">
    <property type="entry name" value="MAT"/>
    <property type="match status" value="1"/>
</dbReference>
<dbReference type="SUPFAM" id="SSF55973">
    <property type="entry name" value="S-adenosylmethionine synthetase"/>
    <property type="match status" value="3"/>
</dbReference>
<dbReference type="PROSITE" id="PS00376">
    <property type="entry name" value="ADOMET_SYNTHASE_1"/>
    <property type="match status" value="1"/>
</dbReference>
<dbReference type="PROSITE" id="PS00377">
    <property type="entry name" value="ADOMET_SYNTHASE_2"/>
    <property type="match status" value="1"/>
</dbReference>
<evidence type="ECO:0000250" key="1"/>
<evidence type="ECO:0000250" key="2">
    <source>
        <dbReference type="UniProtKB" id="P0A817"/>
    </source>
</evidence>
<evidence type="ECO:0000250" key="3">
    <source>
        <dbReference type="UniProtKB" id="P13444"/>
    </source>
</evidence>
<evidence type="ECO:0000250" key="4">
    <source>
        <dbReference type="UniProtKB" id="Q00266"/>
    </source>
</evidence>
<evidence type="ECO:0000250" key="5">
    <source>
        <dbReference type="UniProtKB" id="Q96551"/>
    </source>
</evidence>
<evidence type="ECO:0000305" key="6"/>
<reference key="1">
    <citation type="submission" date="2004-03" db="EMBL/GenBank/DDBJ databases">
        <title>S-adenosyl-L-methionine synthetase 2 mRNA sequence of Daucus carota L.</title>
        <authorList>
            <person name="Park S."/>
            <person name="Park J.-S."/>
            <person name="Park Y."/>
        </authorList>
    </citation>
    <scope>NUCLEOTIDE SEQUENCE [MRNA]</scope>
</reference>
<organism>
    <name type="scientific">Daucus carota</name>
    <name type="common">Wild carrot</name>
    <dbReference type="NCBI Taxonomy" id="4039"/>
    <lineage>
        <taxon>Eukaryota</taxon>
        <taxon>Viridiplantae</taxon>
        <taxon>Streptophyta</taxon>
        <taxon>Embryophyta</taxon>
        <taxon>Tracheophyta</taxon>
        <taxon>Spermatophyta</taxon>
        <taxon>Magnoliopsida</taxon>
        <taxon>eudicotyledons</taxon>
        <taxon>Gunneridae</taxon>
        <taxon>Pentapetalae</taxon>
        <taxon>asterids</taxon>
        <taxon>campanulids</taxon>
        <taxon>Apiales</taxon>
        <taxon>Apiaceae</taxon>
        <taxon>Apioideae</taxon>
        <taxon>Scandiceae</taxon>
        <taxon>Daucinae</taxon>
        <taxon>Daucus</taxon>
        <taxon>Daucus sect. Daucus</taxon>
    </lineage>
</organism>
<comment type="function">
    <text evidence="5">Catalyzes the formation of S-adenosylmethionine from methionine and ATP. The reaction comprises two steps that are both catalyzed by the same enzyme: formation of S-adenosylmethionine (AdoMet) and triphosphate, and subsequent hydrolysis of the triphosphate.</text>
</comment>
<comment type="catalytic activity">
    <reaction evidence="5">
        <text>L-methionine + ATP + H2O = S-adenosyl-L-methionine + phosphate + diphosphate</text>
        <dbReference type="Rhea" id="RHEA:21080"/>
        <dbReference type="ChEBI" id="CHEBI:15377"/>
        <dbReference type="ChEBI" id="CHEBI:30616"/>
        <dbReference type="ChEBI" id="CHEBI:33019"/>
        <dbReference type="ChEBI" id="CHEBI:43474"/>
        <dbReference type="ChEBI" id="CHEBI:57844"/>
        <dbReference type="ChEBI" id="CHEBI:59789"/>
        <dbReference type="EC" id="2.5.1.6"/>
    </reaction>
</comment>
<comment type="cofactor">
    <cofactor evidence="5">
        <name>Mn(2+)</name>
        <dbReference type="ChEBI" id="CHEBI:29035"/>
    </cofactor>
    <cofactor evidence="5">
        <name>Mg(2+)</name>
        <dbReference type="ChEBI" id="CHEBI:18420"/>
    </cofactor>
    <cofactor evidence="5">
        <name>Co(2+)</name>
        <dbReference type="ChEBI" id="CHEBI:48828"/>
    </cofactor>
    <text evidence="3 5">Binds 2 divalent ions per subunit. The metal ions interact primarily with the substrate (By similarity). Can utilize magnesium, manganese or cobalt (in vitro) (By similarity).</text>
</comment>
<comment type="cofactor">
    <cofactor evidence="5">
        <name>K(+)</name>
        <dbReference type="ChEBI" id="CHEBI:29103"/>
    </cofactor>
    <text evidence="3">Binds 1 potassium ion per subunit. The potassium ion interacts primarily with the substrate (By similarity).</text>
</comment>
<comment type="pathway">
    <text evidence="5">Amino-acid biosynthesis; S-adenosyl-L-methionine biosynthesis; S-adenosyl-L-methionine from L-methionine: step 1/1.</text>
</comment>
<comment type="subunit">
    <text evidence="1">Homotetramer.</text>
</comment>
<comment type="subcellular location">
    <subcellularLocation>
        <location evidence="1">Cytoplasm</location>
    </subcellularLocation>
</comment>
<comment type="similarity">
    <text evidence="6">Belongs to the AdoMet synthase family.</text>
</comment>
<proteinExistence type="evidence at transcript level"/>
<keyword id="KW-0067">ATP-binding</keyword>
<keyword id="KW-0170">Cobalt</keyword>
<keyword id="KW-0963">Cytoplasm</keyword>
<keyword id="KW-0460">Magnesium</keyword>
<keyword id="KW-0479">Metal-binding</keyword>
<keyword id="KW-0547">Nucleotide-binding</keyword>
<keyword id="KW-0554">One-carbon metabolism</keyword>
<keyword id="KW-0630">Potassium</keyword>
<keyword id="KW-0808">Transferase</keyword>
<gene>
    <name type="primary">SAMS2</name>
</gene>
<accession>Q56TU3</accession>